<name>Y2253_BACCR</name>
<accession>Q813M3</accession>
<sequence length="71" mass="8562">MKKTFYHYMMKHRAALFRNEISDLAEAMYDDLSFPKQSEDYDEISSYLELSGMLESMSIFDEAWDLYIQDR</sequence>
<evidence type="ECO:0000255" key="1">
    <source>
        <dbReference type="HAMAP-Rule" id="MF_01538"/>
    </source>
</evidence>
<comment type="similarity">
    <text evidence="1">Belongs to the UPF0346 family.</text>
</comment>
<organism>
    <name type="scientific">Bacillus cereus (strain ATCC 14579 / DSM 31 / CCUG 7414 / JCM 2152 / NBRC 15305 / NCIMB 9373 / NCTC 2599 / NRRL B-3711)</name>
    <dbReference type="NCBI Taxonomy" id="226900"/>
    <lineage>
        <taxon>Bacteria</taxon>
        <taxon>Bacillati</taxon>
        <taxon>Bacillota</taxon>
        <taxon>Bacilli</taxon>
        <taxon>Bacillales</taxon>
        <taxon>Bacillaceae</taxon>
        <taxon>Bacillus</taxon>
        <taxon>Bacillus cereus group</taxon>
    </lineage>
</organism>
<reference key="1">
    <citation type="journal article" date="2003" name="Nature">
        <title>Genome sequence of Bacillus cereus and comparative analysis with Bacillus anthracis.</title>
        <authorList>
            <person name="Ivanova N."/>
            <person name="Sorokin A."/>
            <person name="Anderson I."/>
            <person name="Galleron N."/>
            <person name="Candelon B."/>
            <person name="Kapatral V."/>
            <person name="Bhattacharyya A."/>
            <person name="Reznik G."/>
            <person name="Mikhailova N."/>
            <person name="Lapidus A."/>
            <person name="Chu L."/>
            <person name="Mazur M."/>
            <person name="Goltsman E."/>
            <person name="Larsen N."/>
            <person name="D'Souza M."/>
            <person name="Walunas T."/>
            <person name="Grechkin Y."/>
            <person name="Pusch G."/>
            <person name="Haselkorn R."/>
            <person name="Fonstein M."/>
            <person name="Ehrlich S.D."/>
            <person name="Overbeek R."/>
            <person name="Kyrpides N.C."/>
        </authorList>
    </citation>
    <scope>NUCLEOTIDE SEQUENCE [LARGE SCALE GENOMIC DNA]</scope>
    <source>
        <strain>ATCC 14579 / DSM 31 / CCUG 7414 / JCM 2152 / NBRC 15305 / NCIMB 9373 / NCTC 2599 / NRRL B-3711</strain>
    </source>
</reference>
<keyword id="KW-1185">Reference proteome</keyword>
<gene>
    <name type="ordered locus">BC_2253</name>
</gene>
<dbReference type="EMBL" id="AE016877">
    <property type="protein sequence ID" value="AAP09217.1"/>
    <property type="molecule type" value="Genomic_DNA"/>
</dbReference>
<dbReference type="RefSeq" id="NP_832016.1">
    <property type="nucleotide sequence ID" value="NC_004722.1"/>
</dbReference>
<dbReference type="RefSeq" id="WP_000750717.1">
    <property type="nucleotide sequence ID" value="NZ_CP138336.1"/>
</dbReference>
<dbReference type="SMR" id="Q813M3"/>
<dbReference type="STRING" id="226900.BC_2253"/>
<dbReference type="KEGG" id="bce:BC2253"/>
<dbReference type="PATRIC" id="fig|226900.8.peg.2275"/>
<dbReference type="HOGENOM" id="CLU_177534_0_0_9"/>
<dbReference type="OrthoDB" id="2242851at2"/>
<dbReference type="Proteomes" id="UP000001417">
    <property type="component" value="Chromosome"/>
</dbReference>
<dbReference type="Gene3D" id="1.10.150.260">
    <property type="entry name" value="YozE SAM-like"/>
    <property type="match status" value="1"/>
</dbReference>
<dbReference type="HAMAP" id="MF_01538">
    <property type="entry name" value="UPF0346"/>
    <property type="match status" value="1"/>
</dbReference>
<dbReference type="InterPro" id="IPR010673">
    <property type="entry name" value="UPF0346"/>
</dbReference>
<dbReference type="InterPro" id="IPR023089">
    <property type="entry name" value="YozE_SAM-like"/>
</dbReference>
<dbReference type="InterPro" id="IPR036806">
    <property type="entry name" value="YozE_SAM-like_sf"/>
</dbReference>
<dbReference type="NCBIfam" id="NF010193">
    <property type="entry name" value="PRK13672.1"/>
    <property type="match status" value="1"/>
</dbReference>
<dbReference type="Pfam" id="PF06855">
    <property type="entry name" value="YozE_SAM_like"/>
    <property type="match status" value="1"/>
</dbReference>
<dbReference type="PIRSF" id="PIRSF037262">
    <property type="entry name" value="UCP037262"/>
    <property type="match status" value="1"/>
</dbReference>
<dbReference type="SUPFAM" id="SSF140652">
    <property type="entry name" value="YozE-like"/>
    <property type="match status" value="1"/>
</dbReference>
<proteinExistence type="inferred from homology"/>
<feature type="chain" id="PRO_0000164266" description="UPF0346 protein BC_2253">
    <location>
        <begin position="1"/>
        <end position="71"/>
    </location>
</feature>
<protein>
    <recommendedName>
        <fullName evidence="1">UPF0346 protein BC_2253</fullName>
    </recommendedName>
</protein>